<sequence>MHMKSFKIAIDGPAGSGKSTISKKLSQKLGWNHVDTGAMFRALTLYLLENEVSWHHEKSLNQALDKINLSYSCNKIFLNQEDVSLKIKSLDVEKHVSSVALIPAVRTKLLKLQKEICGNTPNLIMDGRDIGTVVMPDANLKIFLTANITKRALRKQQEDAQKGKITDIAQIMKQLKERDHKDYHRQLAPLSKALDAILLDTTELSIDEVIAKIIALIDKKRRT</sequence>
<organism>
    <name type="scientific">Onion yellows phytoplasma (strain OY-M)</name>
    <dbReference type="NCBI Taxonomy" id="262768"/>
    <lineage>
        <taxon>Bacteria</taxon>
        <taxon>Bacillati</taxon>
        <taxon>Mycoplasmatota</taxon>
        <taxon>Mollicutes</taxon>
        <taxon>Acholeplasmatales</taxon>
        <taxon>Acholeplasmataceae</taxon>
        <taxon>Candidatus Phytoplasma</taxon>
        <taxon>16SrI (Aster yellows group)</taxon>
    </lineage>
</organism>
<evidence type="ECO:0000255" key="1">
    <source>
        <dbReference type="HAMAP-Rule" id="MF_00238"/>
    </source>
</evidence>
<accession>Q6YQY4</accession>
<gene>
    <name evidence="1" type="primary">cmk</name>
    <name type="ordered locus">PAM_239</name>
</gene>
<feature type="chain" id="PRO_0000131949" description="Cytidylate kinase">
    <location>
        <begin position="1"/>
        <end position="223"/>
    </location>
</feature>
<feature type="binding site" evidence="1">
    <location>
        <begin position="12"/>
        <end position="20"/>
    </location>
    <ligand>
        <name>ATP</name>
        <dbReference type="ChEBI" id="CHEBI:30616"/>
    </ligand>
</feature>
<dbReference type="EC" id="2.7.4.25" evidence="1"/>
<dbReference type="EMBL" id="AP006628">
    <property type="protein sequence ID" value="BAD04324.1"/>
    <property type="molecule type" value="Genomic_DNA"/>
</dbReference>
<dbReference type="SMR" id="Q6YQY4"/>
<dbReference type="STRING" id="262768.PAM_239"/>
<dbReference type="KEGG" id="poy:PAM_239"/>
<dbReference type="eggNOG" id="COG0283">
    <property type="taxonomic scope" value="Bacteria"/>
</dbReference>
<dbReference type="HOGENOM" id="CLU_079959_0_2_14"/>
<dbReference type="Proteomes" id="UP000002523">
    <property type="component" value="Chromosome"/>
</dbReference>
<dbReference type="GO" id="GO:0005829">
    <property type="term" value="C:cytosol"/>
    <property type="evidence" value="ECO:0007669"/>
    <property type="project" value="TreeGrafter"/>
</dbReference>
<dbReference type="GO" id="GO:0005524">
    <property type="term" value="F:ATP binding"/>
    <property type="evidence" value="ECO:0007669"/>
    <property type="project" value="UniProtKB-UniRule"/>
</dbReference>
<dbReference type="GO" id="GO:0036430">
    <property type="term" value="F:CMP kinase activity"/>
    <property type="evidence" value="ECO:0007669"/>
    <property type="project" value="RHEA"/>
</dbReference>
<dbReference type="GO" id="GO:0036431">
    <property type="term" value="F:dCMP kinase activity"/>
    <property type="evidence" value="ECO:0007669"/>
    <property type="project" value="RHEA"/>
</dbReference>
<dbReference type="GO" id="GO:0015949">
    <property type="term" value="P:nucleobase-containing small molecule interconversion"/>
    <property type="evidence" value="ECO:0007669"/>
    <property type="project" value="TreeGrafter"/>
</dbReference>
<dbReference type="GO" id="GO:0006220">
    <property type="term" value="P:pyrimidine nucleotide metabolic process"/>
    <property type="evidence" value="ECO:0007669"/>
    <property type="project" value="UniProtKB-UniRule"/>
</dbReference>
<dbReference type="CDD" id="cd02020">
    <property type="entry name" value="CMPK"/>
    <property type="match status" value="1"/>
</dbReference>
<dbReference type="Gene3D" id="3.40.50.300">
    <property type="entry name" value="P-loop containing nucleotide triphosphate hydrolases"/>
    <property type="match status" value="1"/>
</dbReference>
<dbReference type="HAMAP" id="MF_00238">
    <property type="entry name" value="Cytidyl_kinase_type1"/>
    <property type="match status" value="1"/>
</dbReference>
<dbReference type="InterPro" id="IPR003136">
    <property type="entry name" value="Cytidylate_kin"/>
</dbReference>
<dbReference type="InterPro" id="IPR011994">
    <property type="entry name" value="Cytidylate_kinase_dom"/>
</dbReference>
<dbReference type="InterPro" id="IPR027417">
    <property type="entry name" value="P-loop_NTPase"/>
</dbReference>
<dbReference type="NCBIfam" id="TIGR00017">
    <property type="entry name" value="cmk"/>
    <property type="match status" value="1"/>
</dbReference>
<dbReference type="PANTHER" id="PTHR21299:SF2">
    <property type="entry name" value="CYTIDYLATE KINASE"/>
    <property type="match status" value="1"/>
</dbReference>
<dbReference type="PANTHER" id="PTHR21299">
    <property type="entry name" value="CYTIDYLATE KINASE/PANTOATE-BETA-ALANINE LIGASE"/>
    <property type="match status" value="1"/>
</dbReference>
<dbReference type="Pfam" id="PF02224">
    <property type="entry name" value="Cytidylate_kin"/>
    <property type="match status" value="1"/>
</dbReference>
<dbReference type="SUPFAM" id="SSF52540">
    <property type="entry name" value="P-loop containing nucleoside triphosphate hydrolases"/>
    <property type="match status" value="1"/>
</dbReference>
<keyword id="KW-0067">ATP-binding</keyword>
<keyword id="KW-0963">Cytoplasm</keyword>
<keyword id="KW-0418">Kinase</keyword>
<keyword id="KW-0547">Nucleotide-binding</keyword>
<keyword id="KW-0808">Transferase</keyword>
<reference key="1">
    <citation type="journal article" date="2004" name="Nat. Genet.">
        <title>Reductive evolution suggested from the complete genome sequence of a plant-pathogenic phytoplasma.</title>
        <authorList>
            <person name="Oshima K."/>
            <person name="Kakizawa S."/>
            <person name="Nishigawa H."/>
            <person name="Jung H.-Y."/>
            <person name="Wei W."/>
            <person name="Suzuki S."/>
            <person name="Arashida R."/>
            <person name="Nakata D."/>
            <person name="Miyata S."/>
            <person name="Ugaki M."/>
            <person name="Namba S."/>
        </authorList>
    </citation>
    <scope>NUCLEOTIDE SEQUENCE [LARGE SCALE GENOMIC DNA]</scope>
    <source>
        <strain>OY-M</strain>
    </source>
</reference>
<name>KCY_ONYPE</name>
<proteinExistence type="inferred from homology"/>
<comment type="catalytic activity">
    <reaction evidence="1">
        <text>CMP + ATP = CDP + ADP</text>
        <dbReference type="Rhea" id="RHEA:11600"/>
        <dbReference type="ChEBI" id="CHEBI:30616"/>
        <dbReference type="ChEBI" id="CHEBI:58069"/>
        <dbReference type="ChEBI" id="CHEBI:60377"/>
        <dbReference type="ChEBI" id="CHEBI:456216"/>
        <dbReference type="EC" id="2.7.4.25"/>
    </reaction>
</comment>
<comment type="catalytic activity">
    <reaction evidence="1">
        <text>dCMP + ATP = dCDP + ADP</text>
        <dbReference type="Rhea" id="RHEA:25094"/>
        <dbReference type="ChEBI" id="CHEBI:30616"/>
        <dbReference type="ChEBI" id="CHEBI:57566"/>
        <dbReference type="ChEBI" id="CHEBI:58593"/>
        <dbReference type="ChEBI" id="CHEBI:456216"/>
        <dbReference type="EC" id="2.7.4.25"/>
    </reaction>
</comment>
<comment type="subcellular location">
    <subcellularLocation>
        <location evidence="1">Cytoplasm</location>
    </subcellularLocation>
</comment>
<comment type="similarity">
    <text evidence="1">Belongs to the cytidylate kinase family. Type 1 subfamily.</text>
</comment>
<protein>
    <recommendedName>
        <fullName evidence="1">Cytidylate kinase</fullName>
        <shortName evidence="1">CK</shortName>
        <ecNumber evidence="1">2.7.4.25</ecNumber>
    </recommendedName>
    <alternativeName>
        <fullName evidence="1">Cytidine monophosphate kinase</fullName>
        <shortName evidence="1">CMP kinase</shortName>
    </alternativeName>
</protein>